<proteinExistence type="inferred from homology"/>
<reference key="1">
    <citation type="journal article" date="2002" name="J. Bacteriol.">
        <title>Whole-genome comparison of Mycobacterium tuberculosis clinical and laboratory strains.</title>
        <authorList>
            <person name="Fleischmann R.D."/>
            <person name="Alland D."/>
            <person name="Eisen J.A."/>
            <person name="Carpenter L."/>
            <person name="White O."/>
            <person name="Peterson J.D."/>
            <person name="DeBoy R.T."/>
            <person name="Dodson R.J."/>
            <person name="Gwinn M.L."/>
            <person name="Haft D.H."/>
            <person name="Hickey E.K."/>
            <person name="Kolonay J.F."/>
            <person name="Nelson W.C."/>
            <person name="Umayam L.A."/>
            <person name="Ermolaeva M.D."/>
            <person name="Salzberg S.L."/>
            <person name="Delcher A."/>
            <person name="Utterback T.R."/>
            <person name="Weidman J.F."/>
            <person name="Khouri H.M."/>
            <person name="Gill J."/>
            <person name="Mikula A."/>
            <person name="Bishai W."/>
            <person name="Jacobs W.R. Jr."/>
            <person name="Venter J.C."/>
            <person name="Fraser C.M."/>
        </authorList>
    </citation>
    <scope>NUCLEOTIDE SEQUENCE [LARGE SCALE GENOMIC DNA]</scope>
    <source>
        <strain>CDC 1551 / Oshkosh</strain>
    </source>
</reference>
<evidence type="ECO:0000255" key="1">
    <source>
        <dbReference type="HAMAP-Rule" id="MF_01382"/>
    </source>
</evidence>
<protein>
    <recommendedName>
        <fullName evidence="1">Protein translocase subunit SecA 2</fullName>
        <ecNumber evidence="1">7.4.2.8</ecNumber>
    </recommendedName>
</protein>
<keyword id="KW-0067">ATP-binding</keyword>
<keyword id="KW-1003">Cell membrane</keyword>
<keyword id="KW-0963">Cytoplasm</keyword>
<keyword id="KW-0472">Membrane</keyword>
<keyword id="KW-0547">Nucleotide-binding</keyword>
<keyword id="KW-0653">Protein transport</keyword>
<keyword id="KW-1185">Reference proteome</keyword>
<keyword id="KW-1278">Translocase</keyword>
<keyword id="KW-0811">Translocation</keyword>
<keyword id="KW-0813">Transport</keyword>
<feature type="chain" id="PRO_0000428327" description="Protein translocase subunit SecA 2">
    <location>
        <begin position="1"/>
        <end position="808"/>
    </location>
</feature>
<feature type="binding site" evidence="1">
    <location>
        <position position="124"/>
    </location>
    <ligand>
        <name>ATP</name>
        <dbReference type="ChEBI" id="CHEBI:30616"/>
    </ligand>
</feature>
<feature type="binding site" evidence="1">
    <location>
        <begin position="142"/>
        <end position="146"/>
    </location>
    <ligand>
        <name>ATP</name>
        <dbReference type="ChEBI" id="CHEBI:30616"/>
    </ligand>
</feature>
<feature type="binding site" evidence="1">
    <location>
        <position position="535"/>
    </location>
    <ligand>
        <name>ATP</name>
        <dbReference type="ChEBI" id="CHEBI:30616"/>
    </ligand>
</feature>
<dbReference type="EC" id="7.4.2.8" evidence="1"/>
<dbReference type="EMBL" id="AE000516">
    <property type="protein sequence ID" value="AAK46142.1"/>
    <property type="molecule type" value="Genomic_DNA"/>
</dbReference>
<dbReference type="PIR" id="F70720">
    <property type="entry name" value="F70720"/>
</dbReference>
<dbReference type="SMR" id="P9WGP2"/>
<dbReference type="KEGG" id="mtc:MT1869"/>
<dbReference type="PATRIC" id="fig|83331.31.peg.2013"/>
<dbReference type="HOGENOM" id="CLU_005314_3_2_11"/>
<dbReference type="Proteomes" id="UP000001020">
    <property type="component" value="Chromosome"/>
</dbReference>
<dbReference type="GO" id="GO:0031522">
    <property type="term" value="C:cell envelope Sec protein transport complex"/>
    <property type="evidence" value="ECO:0007669"/>
    <property type="project" value="TreeGrafter"/>
</dbReference>
<dbReference type="GO" id="GO:0005829">
    <property type="term" value="C:cytosol"/>
    <property type="evidence" value="ECO:0007669"/>
    <property type="project" value="TreeGrafter"/>
</dbReference>
<dbReference type="GO" id="GO:0005886">
    <property type="term" value="C:plasma membrane"/>
    <property type="evidence" value="ECO:0007669"/>
    <property type="project" value="UniProtKB-SubCell"/>
</dbReference>
<dbReference type="GO" id="GO:0005524">
    <property type="term" value="F:ATP binding"/>
    <property type="evidence" value="ECO:0007669"/>
    <property type="project" value="UniProtKB-UniRule"/>
</dbReference>
<dbReference type="GO" id="GO:0008564">
    <property type="term" value="F:protein-exporting ATPase activity"/>
    <property type="evidence" value="ECO:0007669"/>
    <property type="project" value="UniProtKB-EC"/>
</dbReference>
<dbReference type="GO" id="GO:0065002">
    <property type="term" value="P:intracellular protein transmembrane transport"/>
    <property type="evidence" value="ECO:0007669"/>
    <property type="project" value="UniProtKB-UniRule"/>
</dbReference>
<dbReference type="GO" id="GO:0017038">
    <property type="term" value="P:protein import"/>
    <property type="evidence" value="ECO:0007669"/>
    <property type="project" value="InterPro"/>
</dbReference>
<dbReference type="GO" id="GO:0006605">
    <property type="term" value="P:protein targeting"/>
    <property type="evidence" value="ECO:0007669"/>
    <property type="project" value="UniProtKB-UniRule"/>
</dbReference>
<dbReference type="GO" id="GO:0043952">
    <property type="term" value="P:protein transport by the Sec complex"/>
    <property type="evidence" value="ECO:0007669"/>
    <property type="project" value="TreeGrafter"/>
</dbReference>
<dbReference type="CDD" id="cd17928">
    <property type="entry name" value="DEXDc_SecA"/>
    <property type="match status" value="1"/>
</dbReference>
<dbReference type="CDD" id="cd18803">
    <property type="entry name" value="SF2_C_secA"/>
    <property type="match status" value="1"/>
</dbReference>
<dbReference type="FunFam" id="3.40.50.300:FF:000429">
    <property type="entry name" value="Preprotein translocase subunit SecA"/>
    <property type="match status" value="1"/>
</dbReference>
<dbReference type="FunFam" id="1.10.3060.10:FF:000010">
    <property type="entry name" value="Protein translocase subunit SecA 2"/>
    <property type="match status" value="1"/>
</dbReference>
<dbReference type="Gene3D" id="1.10.3060.10">
    <property type="entry name" value="Helical scaffold and wing domains of SecA"/>
    <property type="match status" value="1"/>
</dbReference>
<dbReference type="Gene3D" id="3.40.50.300">
    <property type="entry name" value="P-loop containing nucleotide triphosphate hydrolases"/>
    <property type="match status" value="3"/>
</dbReference>
<dbReference type="Gene3D" id="3.90.1440.10">
    <property type="entry name" value="SecA, preprotein cross-linking domain"/>
    <property type="match status" value="1"/>
</dbReference>
<dbReference type="HAMAP" id="MF_01382">
    <property type="entry name" value="SecA"/>
    <property type="match status" value="1"/>
</dbReference>
<dbReference type="InterPro" id="IPR014001">
    <property type="entry name" value="Helicase_ATP-bd"/>
</dbReference>
<dbReference type="InterPro" id="IPR001650">
    <property type="entry name" value="Helicase_C-like"/>
</dbReference>
<dbReference type="InterPro" id="IPR027417">
    <property type="entry name" value="P-loop_NTPase"/>
</dbReference>
<dbReference type="InterPro" id="IPR000185">
    <property type="entry name" value="SecA"/>
</dbReference>
<dbReference type="InterPro" id="IPR026389">
    <property type="entry name" value="SecA_Actinobact-type"/>
</dbReference>
<dbReference type="InterPro" id="IPR020937">
    <property type="entry name" value="SecA_CS"/>
</dbReference>
<dbReference type="InterPro" id="IPR011115">
    <property type="entry name" value="SecA_DEAD"/>
</dbReference>
<dbReference type="InterPro" id="IPR014018">
    <property type="entry name" value="SecA_motor_DEAD"/>
</dbReference>
<dbReference type="InterPro" id="IPR011130">
    <property type="entry name" value="SecA_preprotein_X-link_dom"/>
</dbReference>
<dbReference type="InterPro" id="IPR044722">
    <property type="entry name" value="SecA_SF2_C"/>
</dbReference>
<dbReference type="InterPro" id="IPR011116">
    <property type="entry name" value="SecA_Wing/Scaffold"/>
</dbReference>
<dbReference type="InterPro" id="IPR036266">
    <property type="entry name" value="SecA_Wing/Scaffold_sf"/>
</dbReference>
<dbReference type="InterPro" id="IPR036670">
    <property type="entry name" value="SecA_X-link_sf"/>
</dbReference>
<dbReference type="NCBIfam" id="TIGR04221">
    <property type="entry name" value="SecA2_Mycobac"/>
    <property type="match status" value="1"/>
</dbReference>
<dbReference type="PANTHER" id="PTHR30612:SF0">
    <property type="entry name" value="CHLOROPLAST PROTEIN-TRANSPORTING ATPASE"/>
    <property type="match status" value="1"/>
</dbReference>
<dbReference type="PANTHER" id="PTHR30612">
    <property type="entry name" value="SECA INNER MEMBRANE COMPONENT OF SEC PROTEIN SECRETION SYSTEM"/>
    <property type="match status" value="1"/>
</dbReference>
<dbReference type="Pfam" id="PF21090">
    <property type="entry name" value="P-loop_SecA"/>
    <property type="match status" value="1"/>
</dbReference>
<dbReference type="Pfam" id="PF07517">
    <property type="entry name" value="SecA_DEAD"/>
    <property type="match status" value="1"/>
</dbReference>
<dbReference type="Pfam" id="PF01043">
    <property type="entry name" value="SecA_PP_bind"/>
    <property type="match status" value="1"/>
</dbReference>
<dbReference type="Pfam" id="PF07516">
    <property type="entry name" value="SecA_SW"/>
    <property type="match status" value="1"/>
</dbReference>
<dbReference type="PRINTS" id="PR00906">
    <property type="entry name" value="SECA"/>
</dbReference>
<dbReference type="SMART" id="SM00957">
    <property type="entry name" value="SecA_DEAD"/>
    <property type="match status" value="1"/>
</dbReference>
<dbReference type="SMART" id="SM00958">
    <property type="entry name" value="SecA_PP_bind"/>
    <property type="match status" value="1"/>
</dbReference>
<dbReference type="SUPFAM" id="SSF81886">
    <property type="entry name" value="Helical scaffold and wing domains of SecA"/>
    <property type="match status" value="1"/>
</dbReference>
<dbReference type="SUPFAM" id="SSF52540">
    <property type="entry name" value="P-loop containing nucleoside triphosphate hydrolases"/>
    <property type="match status" value="2"/>
</dbReference>
<dbReference type="SUPFAM" id="SSF81767">
    <property type="entry name" value="Pre-protein crosslinking domain of SecA"/>
    <property type="match status" value="1"/>
</dbReference>
<dbReference type="PROSITE" id="PS01312">
    <property type="entry name" value="SECA"/>
    <property type="match status" value="1"/>
</dbReference>
<dbReference type="PROSITE" id="PS51196">
    <property type="entry name" value="SECA_MOTOR_DEAD"/>
    <property type="match status" value="1"/>
</dbReference>
<gene>
    <name evidence="1" type="primary">secA2</name>
    <name type="ordered locus">MT1869</name>
</gene>
<comment type="function">
    <text evidence="1">Part of the Sec protein translocase complex. Interacts with the SecYEG preprotein conducting channel. Has a central role in coupling the hydrolysis of ATP to the transfer of proteins into and across the cell membrane, serving as an ATP-driven molecular motor driving the stepwise translocation of polypeptide chains across the membrane.</text>
</comment>
<comment type="catalytic activity">
    <reaction evidence="1">
        <text>ATP + H2O + cellular proteinSide 1 = ADP + phosphate + cellular proteinSide 2.</text>
        <dbReference type="EC" id="7.4.2.8"/>
    </reaction>
</comment>
<comment type="subunit">
    <text evidence="1">Monomer and homodimer. Part of the essential Sec protein translocation apparatus which comprises SecA, SecYEG and auxiliary proteins SecDF. Other proteins may also be involved.</text>
</comment>
<comment type="subcellular location">
    <subcellularLocation>
        <location evidence="1">Cell membrane</location>
        <topology evidence="1">Peripheral membrane protein</topology>
        <orientation evidence="1">Cytoplasmic side</orientation>
    </subcellularLocation>
    <subcellularLocation>
        <location evidence="1">Cytoplasm</location>
    </subcellularLocation>
    <text evidence="1">Distribution is 50-50.</text>
</comment>
<comment type="similarity">
    <text evidence="1">Belongs to the SecA family.</text>
</comment>
<sequence>MNVHGCPRIAACRCTDTHPRGRPAFAYRWFVPKTTRAQPGRLSSRFWRLLGASTEKNRSRSLADVTASAEYDKEAADLSDEKLRKAAGLLNLDDLAESADIPQFLAIAREAAERRTGLRPFDVQLLGALRMLAGDVIEMATGEGKTLAGAIAAAGYALAGRHVHVVTINDYLARRDAEWMGPLLDAMGLTVGWITADSTPDERRTAYDRDVTYASVNEIGFDVLRDQLVTDVNDLVSPNPDVALIDEADSVLVDEALVPLVLAGTTHRETPRLEIIRLVAELVGDKDADEYFATDSDNRNVHLTEHGARKVEKALGGIDLYSEEHVGTTLTEVNVALHAHVLLQRDVHYIVRDDAVHLINASRGRIAQLQRWPDGLQAAVEAKEGIETTETGEVLDTITVQALINRYATVCGMTGTALAAGEQLRQFYQLGVSPIPPNKPNIREDEADRVYITTAAKNDGIVEHITEVHQRGQPVLVGTRDVAESEELHERLVRRGVPAVVLNAKNDAEEARVIAEAGKYGAVTVSTQMAGRGTDIRLGGSDEADHDRVAELGGLHVVGTGRHHTERLDNQLRGRAGRQGDPGSSVFFSSWEDDVVAANLDHNKLPMATDENGRIVSPRTGSLLDHAQRVAEGRLLDVHANTWRYNQLIAQQRAIIVERRNTLLRTVTAREELAELAPKRYEELSDKVSEERLETICRQIMLYHLDRGWADHLAYLADIRESIHLRALGRQNPLDEFHRMAVDAFASLAADAIEAAQQTFETANVLDHEPGLDLSKLARPTSTWTYMVNDNPLSDDTLSALSLPGVFR</sequence>
<name>SECA2_MYCTO</name>
<organism>
    <name type="scientific">Mycobacterium tuberculosis (strain CDC 1551 / Oshkosh)</name>
    <dbReference type="NCBI Taxonomy" id="83331"/>
    <lineage>
        <taxon>Bacteria</taxon>
        <taxon>Bacillati</taxon>
        <taxon>Actinomycetota</taxon>
        <taxon>Actinomycetes</taxon>
        <taxon>Mycobacteriales</taxon>
        <taxon>Mycobacteriaceae</taxon>
        <taxon>Mycobacterium</taxon>
        <taxon>Mycobacterium tuberculosis complex</taxon>
    </lineage>
</organism>
<accession>P9WGP2</accession>
<accession>L0T7S9</accession>
<accession>P66785</accession>
<accession>Q50612</accession>